<keyword id="KW-1185">Reference proteome</keyword>
<accession>Q32BH9</accession>
<comment type="similarity">
    <text evidence="1">Belongs to the UPF0306 family.</text>
</comment>
<organism>
    <name type="scientific">Shigella dysenteriae serotype 1 (strain Sd197)</name>
    <dbReference type="NCBI Taxonomy" id="300267"/>
    <lineage>
        <taxon>Bacteria</taxon>
        <taxon>Pseudomonadati</taxon>
        <taxon>Pseudomonadota</taxon>
        <taxon>Gammaproteobacteria</taxon>
        <taxon>Enterobacterales</taxon>
        <taxon>Enterobacteriaceae</taxon>
        <taxon>Shigella</taxon>
    </lineage>
</organism>
<sequence length="147" mass="16748">METLITISRWLAKQHVVTWCVQQEGELWCANAFYLFDAQKVAFYILTEEKTRHAQMSGPQAAVAGTVNGQPKTVALIRGVQFKGEIRRLEGEESDLARKAYNRRFPVARMLSAPVWEIRLDEIKFTDNTLGFGKKMIWLRGSGTEQA</sequence>
<protein>
    <recommendedName>
        <fullName evidence="1">UPF0306 protein YhbP</fullName>
    </recommendedName>
</protein>
<proteinExistence type="inferred from homology"/>
<reference key="1">
    <citation type="journal article" date="2005" name="Nucleic Acids Res.">
        <title>Genome dynamics and diversity of Shigella species, the etiologic agents of bacillary dysentery.</title>
        <authorList>
            <person name="Yang F."/>
            <person name="Yang J."/>
            <person name="Zhang X."/>
            <person name="Chen L."/>
            <person name="Jiang Y."/>
            <person name="Yan Y."/>
            <person name="Tang X."/>
            <person name="Wang J."/>
            <person name="Xiong Z."/>
            <person name="Dong J."/>
            <person name="Xue Y."/>
            <person name="Zhu Y."/>
            <person name="Xu X."/>
            <person name="Sun L."/>
            <person name="Chen S."/>
            <person name="Nie H."/>
            <person name="Peng J."/>
            <person name="Xu J."/>
            <person name="Wang Y."/>
            <person name="Yuan Z."/>
            <person name="Wen Y."/>
            <person name="Yao Z."/>
            <person name="Shen Y."/>
            <person name="Qiang B."/>
            <person name="Hou Y."/>
            <person name="Yu J."/>
            <person name="Jin Q."/>
        </authorList>
    </citation>
    <scope>NUCLEOTIDE SEQUENCE [LARGE SCALE GENOMIC DNA]</scope>
    <source>
        <strain>Sd197</strain>
    </source>
</reference>
<name>YHBP_SHIDS</name>
<gene>
    <name evidence="1" type="primary">yhbP</name>
    <name type="ordered locus">SDY_3333</name>
</gene>
<feature type="chain" id="PRO_1000046783" description="UPF0306 protein YhbP">
    <location>
        <begin position="1"/>
        <end position="147"/>
    </location>
</feature>
<evidence type="ECO:0000255" key="1">
    <source>
        <dbReference type="HAMAP-Rule" id="MF_00764"/>
    </source>
</evidence>
<dbReference type="EMBL" id="CP000034">
    <property type="protein sequence ID" value="ABB63326.1"/>
    <property type="molecule type" value="Genomic_DNA"/>
</dbReference>
<dbReference type="RefSeq" id="WP_000449041.1">
    <property type="nucleotide sequence ID" value="NC_007606.1"/>
</dbReference>
<dbReference type="RefSeq" id="YP_404817.1">
    <property type="nucleotide sequence ID" value="NC_007606.1"/>
</dbReference>
<dbReference type="SMR" id="Q32BH9"/>
<dbReference type="STRING" id="300267.SDY_3333"/>
<dbReference type="EnsemblBacteria" id="ABB63326">
    <property type="protein sequence ID" value="ABB63326"/>
    <property type="gene ID" value="SDY_3333"/>
</dbReference>
<dbReference type="KEGG" id="sdy:SDY_3333"/>
<dbReference type="PATRIC" id="fig|300267.13.peg.3987"/>
<dbReference type="HOGENOM" id="CLU_105087_3_0_6"/>
<dbReference type="Proteomes" id="UP000002716">
    <property type="component" value="Chromosome"/>
</dbReference>
<dbReference type="FunFam" id="2.30.110.10:FF:000003">
    <property type="entry name" value="UPF0306 protein YhbP"/>
    <property type="match status" value="1"/>
</dbReference>
<dbReference type="Gene3D" id="2.30.110.10">
    <property type="entry name" value="Electron Transport, Fmn-binding Protein, Chain A"/>
    <property type="match status" value="1"/>
</dbReference>
<dbReference type="HAMAP" id="MF_00764">
    <property type="entry name" value="UPF0306"/>
    <property type="match status" value="1"/>
</dbReference>
<dbReference type="InterPro" id="IPR012349">
    <property type="entry name" value="Split_barrel_FMN-bd"/>
</dbReference>
<dbReference type="InterPro" id="IPR011194">
    <property type="entry name" value="UPF0306"/>
</dbReference>
<dbReference type="NCBIfam" id="NF002900">
    <property type="entry name" value="PRK03467.1"/>
    <property type="match status" value="1"/>
</dbReference>
<dbReference type="PIRSF" id="PIRSF009554">
    <property type="entry name" value="UCP009554"/>
    <property type="match status" value="1"/>
</dbReference>
<dbReference type="SUPFAM" id="SSF50475">
    <property type="entry name" value="FMN-binding split barrel"/>
    <property type="match status" value="1"/>
</dbReference>